<protein>
    <recommendedName>
        <fullName evidence="1">DNA ligase</fullName>
        <ecNumber evidence="1">6.5.1.2</ecNumber>
    </recommendedName>
    <alternativeName>
        <fullName evidence="1">Polydeoxyribonucleotide synthase [NAD(+)]</fullName>
    </alternativeName>
</protein>
<comment type="function">
    <text evidence="1">DNA ligase that catalyzes the formation of phosphodiester linkages between 5'-phosphoryl and 3'-hydroxyl groups in double-stranded DNA using NAD as a coenzyme and as the energy source for the reaction. It is essential for DNA replication and repair of damaged DNA.</text>
</comment>
<comment type="catalytic activity">
    <reaction evidence="1">
        <text>NAD(+) + (deoxyribonucleotide)n-3'-hydroxyl + 5'-phospho-(deoxyribonucleotide)m = (deoxyribonucleotide)n+m + AMP + beta-nicotinamide D-nucleotide.</text>
        <dbReference type="EC" id="6.5.1.2"/>
    </reaction>
</comment>
<comment type="cofactor">
    <cofactor evidence="1">
        <name>Mg(2+)</name>
        <dbReference type="ChEBI" id="CHEBI:18420"/>
    </cofactor>
    <cofactor evidence="1">
        <name>Mn(2+)</name>
        <dbReference type="ChEBI" id="CHEBI:29035"/>
    </cofactor>
</comment>
<comment type="similarity">
    <text evidence="1">Belongs to the NAD-dependent DNA ligase family. LigA subfamily.</text>
</comment>
<dbReference type="EC" id="6.5.1.2" evidence="1"/>
<dbReference type="EMBL" id="CP001050">
    <property type="protein sequence ID" value="ACF29062.1"/>
    <property type="molecule type" value="Genomic_DNA"/>
</dbReference>
<dbReference type="SMR" id="B4RJQ9"/>
<dbReference type="KEGG" id="ngk:NGK_0369"/>
<dbReference type="HOGENOM" id="CLU_007764_2_1_4"/>
<dbReference type="Proteomes" id="UP000002564">
    <property type="component" value="Chromosome"/>
</dbReference>
<dbReference type="GO" id="GO:0005829">
    <property type="term" value="C:cytosol"/>
    <property type="evidence" value="ECO:0007669"/>
    <property type="project" value="TreeGrafter"/>
</dbReference>
<dbReference type="GO" id="GO:0003911">
    <property type="term" value="F:DNA ligase (NAD+) activity"/>
    <property type="evidence" value="ECO:0007669"/>
    <property type="project" value="UniProtKB-UniRule"/>
</dbReference>
<dbReference type="GO" id="GO:0046872">
    <property type="term" value="F:metal ion binding"/>
    <property type="evidence" value="ECO:0007669"/>
    <property type="project" value="UniProtKB-KW"/>
</dbReference>
<dbReference type="GO" id="GO:0006281">
    <property type="term" value="P:DNA repair"/>
    <property type="evidence" value="ECO:0007669"/>
    <property type="project" value="UniProtKB-KW"/>
</dbReference>
<dbReference type="GO" id="GO:0006260">
    <property type="term" value="P:DNA replication"/>
    <property type="evidence" value="ECO:0007669"/>
    <property type="project" value="UniProtKB-KW"/>
</dbReference>
<dbReference type="CDD" id="cd17748">
    <property type="entry name" value="BRCT_DNA_ligase_like"/>
    <property type="match status" value="1"/>
</dbReference>
<dbReference type="CDD" id="cd00114">
    <property type="entry name" value="LIGANc"/>
    <property type="match status" value="1"/>
</dbReference>
<dbReference type="FunFam" id="1.10.150.20:FF:000006">
    <property type="entry name" value="DNA ligase"/>
    <property type="match status" value="1"/>
</dbReference>
<dbReference type="FunFam" id="1.10.287.610:FF:000002">
    <property type="entry name" value="DNA ligase"/>
    <property type="match status" value="1"/>
</dbReference>
<dbReference type="FunFam" id="2.40.50.140:FF:000012">
    <property type="entry name" value="DNA ligase"/>
    <property type="match status" value="1"/>
</dbReference>
<dbReference type="FunFam" id="3.30.470.30:FF:000001">
    <property type="entry name" value="DNA ligase"/>
    <property type="match status" value="1"/>
</dbReference>
<dbReference type="FunFam" id="3.40.50.10190:FF:000045">
    <property type="entry name" value="DNA ligase"/>
    <property type="match status" value="1"/>
</dbReference>
<dbReference type="Gene3D" id="6.20.10.30">
    <property type="match status" value="1"/>
</dbReference>
<dbReference type="Gene3D" id="1.10.150.20">
    <property type="entry name" value="5' to 3' exonuclease, C-terminal subdomain"/>
    <property type="match status" value="2"/>
</dbReference>
<dbReference type="Gene3D" id="3.40.50.10190">
    <property type="entry name" value="BRCT domain"/>
    <property type="match status" value="1"/>
</dbReference>
<dbReference type="Gene3D" id="3.30.470.30">
    <property type="entry name" value="DNA ligase/mRNA capping enzyme"/>
    <property type="match status" value="1"/>
</dbReference>
<dbReference type="Gene3D" id="1.10.287.610">
    <property type="entry name" value="Helix hairpin bin"/>
    <property type="match status" value="1"/>
</dbReference>
<dbReference type="Gene3D" id="2.40.50.140">
    <property type="entry name" value="Nucleic acid-binding proteins"/>
    <property type="match status" value="1"/>
</dbReference>
<dbReference type="HAMAP" id="MF_01588">
    <property type="entry name" value="DNA_ligase_A"/>
    <property type="match status" value="1"/>
</dbReference>
<dbReference type="InterPro" id="IPR001357">
    <property type="entry name" value="BRCT_dom"/>
</dbReference>
<dbReference type="InterPro" id="IPR036420">
    <property type="entry name" value="BRCT_dom_sf"/>
</dbReference>
<dbReference type="InterPro" id="IPR041663">
    <property type="entry name" value="DisA/LigA_HHH"/>
</dbReference>
<dbReference type="InterPro" id="IPR001679">
    <property type="entry name" value="DNA_ligase"/>
</dbReference>
<dbReference type="InterPro" id="IPR018239">
    <property type="entry name" value="DNA_ligase_AS"/>
</dbReference>
<dbReference type="InterPro" id="IPR033136">
    <property type="entry name" value="DNA_ligase_CS"/>
</dbReference>
<dbReference type="InterPro" id="IPR013839">
    <property type="entry name" value="DNAligase_adenylation"/>
</dbReference>
<dbReference type="InterPro" id="IPR013840">
    <property type="entry name" value="DNAligase_N"/>
</dbReference>
<dbReference type="InterPro" id="IPR012340">
    <property type="entry name" value="NA-bd_OB-fold"/>
</dbReference>
<dbReference type="InterPro" id="IPR004150">
    <property type="entry name" value="NAD_DNA_ligase_OB"/>
</dbReference>
<dbReference type="InterPro" id="IPR010994">
    <property type="entry name" value="RuvA_2-like"/>
</dbReference>
<dbReference type="InterPro" id="IPR004149">
    <property type="entry name" value="Znf_DNAligase_C4"/>
</dbReference>
<dbReference type="NCBIfam" id="TIGR00575">
    <property type="entry name" value="dnlj"/>
    <property type="match status" value="1"/>
</dbReference>
<dbReference type="NCBIfam" id="NF005932">
    <property type="entry name" value="PRK07956.1"/>
    <property type="match status" value="1"/>
</dbReference>
<dbReference type="PANTHER" id="PTHR23389">
    <property type="entry name" value="CHROMOSOME TRANSMISSION FIDELITY FACTOR 18"/>
    <property type="match status" value="1"/>
</dbReference>
<dbReference type="PANTHER" id="PTHR23389:SF9">
    <property type="entry name" value="DNA LIGASE"/>
    <property type="match status" value="1"/>
</dbReference>
<dbReference type="Pfam" id="PF00533">
    <property type="entry name" value="BRCT"/>
    <property type="match status" value="1"/>
</dbReference>
<dbReference type="Pfam" id="PF01653">
    <property type="entry name" value="DNA_ligase_aden"/>
    <property type="match status" value="1"/>
</dbReference>
<dbReference type="Pfam" id="PF03120">
    <property type="entry name" value="DNA_ligase_OB"/>
    <property type="match status" value="1"/>
</dbReference>
<dbReference type="Pfam" id="PF03119">
    <property type="entry name" value="DNA_ligase_ZBD"/>
    <property type="match status" value="1"/>
</dbReference>
<dbReference type="Pfam" id="PF12826">
    <property type="entry name" value="HHH_2"/>
    <property type="match status" value="1"/>
</dbReference>
<dbReference type="Pfam" id="PF22745">
    <property type="entry name" value="Nlig-Ia"/>
    <property type="match status" value="1"/>
</dbReference>
<dbReference type="PIRSF" id="PIRSF001604">
    <property type="entry name" value="LigA"/>
    <property type="match status" value="1"/>
</dbReference>
<dbReference type="SMART" id="SM00292">
    <property type="entry name" value="BRCT"/>
    <property type="match status" value="1"/>
</dbReference>
<dbReference type="SMART" id="SM00532">
    <property type="entry name" value="LIGANc"/>
    <property type="match status" value="1"/>
</dbReference>
<dbReference type="SUPFAM" id="SSF52113">
    <property type="entry name" value="BRCT domain"/>
    <property type="match status" value="1"/>
</dbReference>
<dbReference type="SUPFAM" id="SSF56091">
    <property type="entry name" value="DNA ligase/mRNA capping enzyme, catalytic domain"/>
    <property type="match status" value="1"/>
</dbReference>
<dbReference type="SUPFAM" id="SSF50249">
    <property type="entry name" value="Nucleic acid-binding proteins"/>
    <property type="match status" value="1"/>
</dbReference>
<dbReference type="SUPFAM" id="SSF47781">
    <property type="entry name" value="RuvA domain 2-like"/>
    <property type="match status" value="1"/>
</dbReference>
<dbReference type="PROSITE" id="PS50172">
    <property type="entry name" value="BRCT"/>
    <property type="match status" value="1"/>
</dbReference>
<dbReference type="PROSITE" id="PS01055">
    <property type="entry name" value="DNA_LIGASE_N1"/>
    <property type="match status" value="1"/>
</dbReference>
<dbReference type="PROSITE" id="PS01056">
    <property type="entry name" value="DNA_LIGASE_N2"/>
    <property type="match status" value="1"/>
</dbReference>
<gene>
    <name evidence="1" type="primary">ligA</name>
    <name type="ordered locus">NGK_0369</name>
</gene>
<reference key="1">
    <citation type="journal article" date="2008" name="J. Bacteriol.">
        <title>Complete genome sequence of Neisseria gonorrhoeae NCCP11945.</title>
        <authorList>
            <person name="Chung G.T."/>
            <person name="Yoo J.S."/>
            <person name="Oh H.B."/>
            <person name="Lee Y.S."/>
            <person name="Cha S.H."/>
            <person name="Kim S.J."/>
            <person name="Yoo C.K."/>
        </authorList>
    </citation>
    <scope>NUCLEOTIDE SEQUENCE [LARGE SCALE GENOMIC DNA]</scope>
    <source>
        <strain>NCCP11945</strain>
    </source>
</reference>
<sequence length="823" mass="90301">MNPTAQRIHELTDLLNRYAYEYYTLDAPSIPDAEYDRLFRELEALERNHPELKLPDSPTQRVGGEPLAGFAEVRHEVPMLSLTNAFSPQDENGVFDHAEMYAFDQRVRDGLDGGNPEYVIEPKFDGLAISLLYRDGVLVQAATRGDGTTGEDVTRNVKTVSNIPLRLHGENVPELIEVRGEVLMLKADFAGLNKRQAENGQKPFANPRNAAAGSLRQLDSRITAQRKLHFFPYSIARQQGGFEAEEHIQELAYFQELGFSLPNGNFGCFKNIGEVLAFYEHMQQKRPELPYEIDGMVVKVNSLAQQRELGFISRAPRWAVAHKFPAEEALTIVEAIDVQIGRTGAVTPVARLQPVFVGGVTVTNATLHNQDEVSRKDVRVGDTVVVRRAGDVIPEVVRVIFERRPMQETAVAVSDGIGHQQDDLFAETPSAKQTESVPLHKPYRLPARCPICRSEIEREEGEAVARCSGGMLCQAQRAQGLIHFASRKAMDIDGLGEKQIEQLVAQDLVRHFADLYRIDIPTLQKMKETADKGSSENENGDAETVSGDLSKYNTQNGKKQPTKWAQNILAGIESGKTPELARFLFALGIRHVGERTAKTLAQAFGTLERVRRAPEPVLACLPDIGTVVARSIAHFFAQAEQQAMIDELLAAGVAPQAQAVSLPAAQYAGPQRWITRLPGFKISENKAQALWELAGQSIEGLQNDKALPADWQAWRSKAQNTALLENLKTFFAQMPSEDEAAQGSDGINKAVAGKTFVLTGTLPTFKRDQAQALIEAAGGKVSGSVSKKTDYVVAGEAAGSKLEKANALGVSVLSEAELLTLLC</sequence>
<feature type="chain" id="PRO_0000380431" description="DNA ligase">
    <location>
        <begin position="1"/>
        <end position="823"/>
    </location>
</feature>
<feature type="domain" description="BRCT" evidence="1">
    <location>
        <begin position="746"/>
        <end position="823"/>
    </location>
</feature>
<feature type="region of interest" description="Disordered" evidence="2">
    <location>
        <begin position="528"/>
        <end position="558"/>
    </location>
</feature>
<feature type="active site" description="N6-AMP-lysine intermediate" evidence="1">
    <location>
        <position position="123"/>
    </location>
</feature>
<feature type="binding site" evidence="1">
    <location>
        <begin position="32"/>
        <end position="36"/>
    </location>
    <ligand>
        <name>NAD(+)</name>
        <dbReference type="ChEBI" id="CHEBI:57540"/>
    </ligand>
</feature>
<feature type="binding site" evidence="1">
    <location>
        <begin position="81"/>
        <end position="82"/>
    </location>
    <ligand>
        <name>NAD(+)</name>
        <dbReference type="ChEBI" id="CHEBI:57540"/>
    </ligand>
</feature>
<feature type="binding site" evidence="1">
    <location>
        <position position="121"/>
    </location>
    <ligand>
        <name>NAD(+)</name>
        <dbReference type="ChEBI" id="CHEBI:57540"/>
    </ligand>
</feature>
<feature type="binding site" evidence="1">
    <location>
        <position position="144"/>
    </location>
    <ligand>
        <name>NAD(+)</name>
        <dbReference type="ChEBI" id="CHEBI:57540"/>
    </ligand>
</feature>
<feature type="binding site" evidence="1">
    <location>
        <position position="181"/>
    </location>
    <ligand>
        <name>NAD(+)</name>
        <dbReference type="ChEBI" id="CHEBI:57540"/>
    </ligand>
</feature>
<feature type="binding site" evidence="1">
    <location>
        <position position="299"/>
    </location>
    <ligand>
        <name>NAD(+)</name>
        <dbReference type="ChEBI" id="CHEBI:57540"/>
    </ligand>
</feature>
<feature type="binding site" evidence="1">
    <location>
        <position position="323"/>
    </location>
    <ligand>
        <name>NAD(+)</name>
        <dbReference type="ChEBI" id="CHEBI:57540"/>
    </ligand>
</feature>
<feature type="binding site" evidence="1">
    <location>
        <position position="449"/>
    </location>
    <ligand>
        <name>Zn(2+)</name>
        <dbReference type="ChEBI" id="CHEBI:29105"/>
    </ligand>
</feature>
<feature type="binding site" evidence="1">
    <location>
        <position position="452"/>
    </location>
    <ligand>
        <name>Zn(2+)</name>
        <dbReference type="ChEBI" id="CHEBI:29105"/>
    </ligand>
</feature>
<feature type="binding site" evidence="1">
    <location>
        <position position="467"/>
    </location>
    <ligand>
        <name>Zn(2+)</name>
        <dbReference type="ChEBI" id="CHEBI:29105"/>
    </ligand>
</feature>
<feature type="binding site" evidence="1">
    <location>
        <position position="473"/>
    </location>
    <ligand>
        <name>Zn(2+)</name>
        <dbReference type="ChEBI" id="CHEBI:29105"/>
    </ligand>
</feature>
<name>DNLJ_NEIG2</name>
<evidence type="ECO:0000255" key="1">
    <source>
        <dbReference type="HAMAP-Rule" id="MF_01588"/>
    </source>
</evidence>
<evidence type="ECO:0000256" key="2">
    <source>
        <dbReference type="SAM" id="MobiDB-lite"/>
    </source>
</evidence>
<proteinExistence type="inferred from homology"/>
<keyword id="KW-0227">DNA damage</keyword>
<keyword id="KW-0234">DNA repair</keyword>
<keyword id="KW-0235">DNA replication</keyword>
<keyword id="KW-0436">Ligase</keyword>
<keyword id="KW-0460">Magnesium</keyword>
<keyword id="KW-0464">Manganese</keyword>
<keyword id="KW-0479">Metal-binding</keyword>
<keyword id="KW-0520">NAD</keyword>
<keyword id="KW-0862">Zinc</keyword>
<accession>B4RJQ9</accession>
<organism>
    <name type="scientific">Neisseria gonorrhoeae (strain NCCP11945)</name>
    <dbReference type="NCBI Taxonomy" id="521006"/>
    <lineage>
        <taxon>Bacteria</taxon>
        <taxon>Pseudomonadati</taxon>
        <taxon>Pseudomonadota</taxon>
        <taxon>Betaproteobacteria</taxon>
        <taxon>Neisseriales</taxon>
        <taxon>Neisseriaceae</taxon>
        <taxon>Neisseria</taxon>
    </lineage>
</organism>